<accession>Q28FJ2</accession>
<reference key="1">
    <citation type="submission" date="2006-03" db="EMBL/GenBank/DDBJ databases">
        <authorList>
            <consortium name="Sanger Xenopus tropicalis EST/cDNA project"/>
        </authorList>
    </citation>
    <scope>NUCLEOTIDE SEQUENCE [LARGE SCALE MRNA]</scope>
    <source>
        <tissue>Neurula</tissue>
    </source>
</reference>
<protein>
    <recommendedName>
        <fullName>Ankyrin repeat domain-containing protein 37</fullName>
    </recommendedName>
</protein>
<proteinExistence type="evidence at transcript level"/>
<sequence>MLQLCDSECDGLSSLMECGGAVNSPGDTLGQSPAHLAACGGQAFFLLWQLQTGVDVNQQDCFGEAPIHKAARSGSMECLSLLIASDARIDMCNKDGHTAEDVALSCGFLDCARYLATIKLTQDTFSRAQSSLHNLKETAAGVKRGQCCQSISHGKRRRSDGFV</sequence>
<gene>
    <name type="primary">ankrd37</name>
    <name type="ORF">TNeu030j10.1</name>
</gene>
<dbReference type="EMBL" id="CR761945">
    <property type="protein sequence ID" value="CAJ82349.1"/>
    <property type="molecule type" value="mRNA"/>
</dbReference>
<dbReference type="RefSeq" id="NP_001017037.1">
    <property type="nucleotide sequence ID" value="NM_001017037.2"/>
</dbReference>
<dbReference type="SMR" id="Q28FJ2"/>
<dbReference type="FunCoup" id="Q28FJ2">
    <property type="interactions" value="681"/>
</dbReference>
<dbReference type="PaxDb" id="8364-ENSXETP00000054652"/>
<dbReference type="GeneID" id="549791"/>
<dbReference type="KEGG" id="xtr:549791"/>
<dbReference type="AGR" id="Xenbase:XB-GENE-984889"/>
<dbReference type="CTD" id="353322"/>
<dbReference type="Xenbase" id="XB-GENE-984889">
    <property type="gene designation" value="ankrd37"/>
</dbReference>
<dbReference type="eggNOG" id="KOG0504">
    <property type="taxonomic scope" value="Eukaryota"/>
</dbReference>
<dbReference type="HOGENOM" id="CLU_000134_42_0_1"/>
<dbReference type="InParanoid" id="Q28FJ2"/>
<dbReference type="OMA" id="CNPEADG"/>
<dbReference type="OrthoDB" id="5402602at2759"/>
<dbReference type="PhylomeDB" id="Q28FJ2"/>
<dbReference type="TreeFam" id="TF338463"/>
<dbReference type="Proteomes" id="UP000008143">
    <property type="component" value="Chromosome 1"/>
</dbReference>
<dbReference type="Bgee" id="ENSXETG00000025738">
    <property type="expression patterns" value="Expressed in neurula embryo and 12 other cell types or tissues"/>
</dbReference>
<dbReference type="ExpressionAtlas" id="Q28FJ2">
    <property type="expression patterns" value="baseline"/>
</dbReference>
<dbReference type="GO" id="GO:0005737">
    <property type="term" value="C:cytoplasm"/>
    <property type="evidence" value="ECO:0007669"/>
    <property type="project" value="UniProtKB-SubCell"/>
</dbReference>
<dbReference type="GO" id="GO:0005634">
    <property type="term" value="C:nucleus"/>
    <property type="evidence" value="ECO:0007669"/>
    <property type="project" value="UniProtKB-SubCell"/>
</dbReference>
<dbReference type="Gene3D" id="1.25.40.20">
    <property type="entry name" value="Ankyrin repeat-containing domain"/>
    <property type="match status" value="1"/>
</dbReference>
<dbReference type="InterPro" id="IPR050776">
    <property type="entry name" value="Ank_Repeat/CDKN_Inhibitor"/>
</dbReference>
<dbReference type="InterPro" id="IPR002110">
    <property type="entry name" value="Ankyrin_rpt"/>
</dbReference>
<dbReference type="InterPro" id="IPR036770">
    <property type="entry name" value="Ankyrin_rpt-contain_sf"/>
</dbReference>
<dbReference type="PANTHER" id="PTHR24201">
    <property type="entry name" value="ANK_REP_REGION DOMAIN-CONTAINING PROTEIN"/>
    <property type="match status" value="1"/>
</dbReference>
<dbReference type="PANTHER" id="PTHR24201:SF0">
    <property type="entry name" value="ANKYRIN REPEAT DOMAIN-CONTAINING PROTEIN 37"/>
    <property type="match status" value="1"/>
</dbReference>
<dbReference type="Pfam" id="PF12796">
    <property type="entry name" value="Ank_2"/>
    <property type="match status" value="1"/>
</dbReference>
<dbReference type="SMART" id="SM00248">
    <property type="entry name" value="ANK"/>
    <property type="match status" value="3"/>
</dbReference>
<dbReference type="SUPFAM" id="SSF48403">
    <property type="entry name" value="Ankyrin repeat"/>
    <property type="match status" value="1"/>
</dbReference>
<dbReference type="PROSITE" id="PS50297">
    <property type="entry name" value="ANK_REP_REGION"/>
    <property type="match status" value="1"/>
</dbReference>
<dbReference type="PROSITE" id="PS50088">
    <property type="entry name" value="ANK_REPEAT"/>
    <property type="match status" value="1"/>
</dbReference>
<comment type="subcellular location">
    <subcellularLocation>
        <location evidence="2">Nucleus</location>
    </subcellularLocation>
    <subcellularLocation>
        <location evidence="2">Cytoplasm</location>
    </subcellularLocation>
</comment>
<keyword id="KW-0040">ANK repeat</keyword>
<keyword id="KW-0963">Cytoplasm</keyword>
<keyword id="KW-0539">Nucleus</keyword>
<keyword id="KW-1185">Reference proteome</keyword>
<keyword id="KW-0677">Repeat</keyword>
<organism>
    <name type="scientific">Xenopus tropicalis</name>
    <name type="common">Western clawed frog</name>
    <name type="synonym">Silurana tropicalis</name>
    <dbReference type="NCBI Taxonomy" id="8364"/>
    <lineage>
        <taxon>Eukaryota</taxon>
        <taxon>Metazoa</taxon>
        <taxon>Chordata</taxon>
        <taxon>Craniata</taxon>
        <taxon>Vertebrata</taxon>
        <taxon>Euteleostomi</taxon>
        <taxon>Amphibia</taxon>
        <taxon>Batrachia</taxon>
        <taxon>Anura</taxon>
        <taxon>Pipoidea</taxon>
        <taxon>Pipidae</taxon>
        <taxon>Xenopodinae</taxon>
        <taxon>Xenopus</taxon>
        <taxon>Silurana</taxon>
    </lineage>
</organism>
<feature type="chain" id="PRO_0000244363" description="Ankyrin repeat domain-containing protein 37">
    <location>
        <begin position="1"/>
        <end position="163"/>
    </location>
</feature>
<feature type="repeat" description="ANK 1">
    <location>
        <begin position="29"/>
        <end position="58"/>
    </location>
</feature>
<feature type="repeat" description="ANK 2">
    <location>
        <begin position="62"/>
        <end position="91"/>
    </location>
</feature>
<feature type="repeat" description="ANK 3">
    <location>
        <begin position="95"/>
        <end position="124"/>
    </location>
</feature>
<feature type="short sequence motif" description="Nuclear localization signal" evidence="1">
    <location>
        <begin position="129"/>
        <end position="149"/>
    </location>
</feature>
<evidence type="ECO:0000250" key="1">
    <source>
        <dbReference type="UniProtKB" id="Q569N2"/>
    </source>
</evidence>
<evidence type="ECO:0000250" key="2">
    <source>
        <dbReference type="UniProtKB" id="Q7Z713"/>
    </source>
</evidence>
<name>ANR37_XENTR</name>